<gene>
    <name evidence="1" type="primary">plsX</name>
    <name type="ordered locus">SF1094</name>
    <name type="ordered locus">S1174</name>
</gene>
<feature type="chain" id="PRO_0000189933" description="Phosphate acyltransferase">
    <location>
        <begin position="1"/>
        <end position="356"/>
    </location>
</feature>
<feature type="sequence conflict" description="In Ref. 2; AAP16601." evidence="2" ref="2">
    <original>S</original>
    <variation>F</variation>
    <location>
        <position position="54"/>
    </location>
</feature>
<sequence length="356" mass="38196">MTRLTLALDVMGGDFGPSVTVPAALQALNSNSQLTLLLVGNPDAITPLLAKADSEQRSRLQIIPAQSVIASDARPSQAIRASRGSSMRMALELVKEGRAQACVSAGNTGALMGLAKLLLKPLEGIERPALVTVLPHQQKGKTVVLDLGANVDCDSTMLVQFAIMGSVLAEEVVEIPNPRVALLNIGEEEVKGLDSIRDASAVLKTIPSINYIGYLEANELLTGKTDVLVCDGFTGNVTLKTMEGVVRMFLSLLKSQGEGKKRSWWLLLLKRWLQKSLTRRFSHLNPDQYNGACLLGLRGTVIKSHGAANQRAFAVAIEQAVQAVQRQVPQRIAARLESVYPAGFELLDGGKSGTLR</sequence>
<reference key="1">
    <citation type="journal article" date="2002" name="Nucleic Acids Res.">
        <title>Genome sequence of Shigella flexneri 2a: insights into pathogenicity through comparison with genomes of Escherichia coli K12 and O157.</title>
        <authorList>
            <person name="Jin Q."/>
            <person name="Yuan Z."/>
            <person name="Xu J."/>
            <person name="Wang Y."/>
            <person name="Shen Y."/>
            <person name="Lu W."/>
            <person name="Wang J."/>
            <person name="Liu H."/>
            <person name="Yang J."/>
            <person name="Yang F."/>
            <person name="Zhang X."/>
            <person name="Zhang J."/>
            <person name="Yang G."/>
            <person name="Wu H."/>
            <person name="Qu D."/>
            <person name="Dong J."/>
            <person name="Sun L."/>
            <person name="Xue Y."/>
            <person name="Zhao A."/>
            <person name="Gao Y."/>
            <person name="Zhu J."/>
            <person name="Kan B."/>
            <person name="Ding K."/>
            <person name="Chen S."/>
            <person name="Cheng H."/>
            <person name="Yao Z."/>
            <person name="He B."/>
            <person name="Chen R."/>
            <person name="Ma D."/>
            <person name="Qiang B."/>
            <person name="Wen Y."/>
            <person name="Hou Y."/>
            <person name="Yu J."/>
        </authorList>
    </citation>
    <scope>NUCLEOTIDE SEQUENCE [LARGE SCALE GENOMIC DNA]</scope>
    <source>
        <strain>301 / Serotype 2a</strain>
    </source>
</reference>
<reference key="2">
    <citation type="journal article" date="2003" name="Infect. Immun.">
        <title>Complete genome sequence and comparative genomics of Shigella flexneri serotype 2a strain 2457T.</title>
        <authorList>
            <person name="Wei J."/>
            <person name="Goldberg M.B."/>
            <person name="Burland V."/>
            <person name="Venkatesan M.M."/>
            <person name="Deng W."/>
            <person name="Fournier G."/>
            <person name="Mayhew G.F."/>
            <person name="Plunkett G. III"/>
            <person name="Rose D.J."/>
            <person name="Darling A."/>
            <person name="Mau B."/>
            <person name="Perna N.T."/>
            <person name="Payne S.M."/>
            <person name="Runyen-Janecky L.J."/>
            <person name="Zhou S."/>
            <person name="Schwartz D.C."/>
            <person name="Blattner F.R."/>
        </authorList>
    </citation>
    <scope>NUCLEOTIDE SEQUENCE [LARGE SCALE GENOMIC DNA]</scope>
    <source>
        <strain>ATCC 700930 / 2457T / Serotype 2a</strain>
    </source>
</reference>
<accession>Q83RS9</accession>
<accession>Q7UCW7</accession>
<organism>
    <name type="scientific">Shigella flexneri</name>
    <dbReference type="NCBI Taxonomy" id="623"/>
    <lineage>
        <taxon>Bacteria</taxon>
        <taxon>Pseudomonadati</taxon>
        <taxon>Pseudomonadota</taxon>
        <taxon>Gammaproteobacteria</taxon>
        <taxon>Enterobacterales</taxon>
        <taxon>Enterobacteriaceae</taxon>
        <taxon>Shigella</taxon>
    </lineage>
</organism>
<comment type="function">
    <text evidence="1">Catalyzes the reversible formation of acyl-phosphate (acyl-PO(4)) from acyl-[acyl-carrier-protein] (acyl-ACP). This enzyme utilizes acyl-ACP as fatty acyl donor, but not acyl-CoA.</text>
</comment>
<comment type="catalytic activity">
    <reaction evidence="1">
        <text>a fatty acyl-[ACP] + phosphate = an acyl phosphate + holo-[ACP]</text>
        <dbReference type="Rhea" id="RHEA:42292"/>
        <dbReference type="Rhea" id="RHEA-COMP:9685"/>
        <dbReference type="Rhea" id="RHEA-COMP:14125"/>
        <dbReference type="ChEBI" id="CHEBI:43474"/>
        <dbReference type="ChEBI" id="CHEBI:59918"/>
        <dbReference type="ChEBI" id="CHEBI:64479"/>
        <dbReference type="ChEBI" id="CHEBI:138651"/>
        <dbReference type="EC" id="2.3.1.274"/>
    </reaction>
</comment>
<comment type="pathway">
    <text evidence="1">Lipid metabolism; phospholipid metabolism.</text>
</comment>
<comment type="subunit">
    <text evidence="1">Homodimer. Probably interacts with PlsY.</text>
</comment>
<comment type="subcellular location">
    <subcellularLocation>
        <location evidence="1">Cytoplasm</location>
    </subcellularLocation>
    <text evidence="1">Associated with the membrane possibly through PlsY.</text>
</comment>
<comment type="similarity">
    <text evidence="1">Belongs to the PlsX family.</text>
</comment>
<comment type="sequence caution" evidence="2">
    <conflict type="erroneous initiation">
        <sequence resource="EMBL-CDS" id="AAN42713"/>
    </conflict>
    <text>Truncated N-terminus.</text>
</comment>
<comment type="sequence caution" evidence="2">
    <conflict type="erroneous initiation">
        <sequence resource="EMBL-CDS" id="AAP16601"/>
    </conflict>
    <text>Truncated N-terminus.</text>
</comment>
<dbReference type="EC" id="2.3.1.274" evidence="1"/>
<dbReference type="EMBL" id="AE005674">
    <property type="protein sequence ID" value="AAN42713.2"/>
    <property type="status" value="ALT_INIT"/>
    <property type="molecule type" value="Genomic_DNA"/>
</dbReference>
<dbReference type="EMBL" id="AE014073">
    <property type="protein sequence ID" value="AAP16601.1"/>
    <property type="status" value="ALT_INIT"/>
    <property type="molecule type" value="Genomic_DNA"/>
</dbReference>
<dbReference type="RefSeq" id="NP_707006.4">
    <property type="nucleotide sequence ID" value="NC_004337.2"/>
</dbReference>
<dbReference type="RefSeq" id="WP_000197594.1">
    <property type="nucleotide sequence ID" value="NZ_CP123365.1"/>
</dbReference>
<dbReference type="SMR" id="Q83RS9"/>
<dbReference type="STRING" id="198214.SF1094"/>
<dbReference type="PaxDb" id="198214-SF1094"/>
<dbReference type="GeneID" id="1024064"/>
<dbReference type="KEGG" id="sfl:SF1094"/>
<dbReference type="KEGG" id="sfx:S1174"/>
<dbReference type="PATRIC" id="fig|198214.7.peg.1282"/>
<dbReference type="HOGENOM" id="CLU_039379_1_0_6"/>
<dbReference type="UniPathway" id="UPA00085"/>
<dbReference type="Proteomes" id="UP000001006">
    <property type="component" value="Chromosome"/>
</dbReference>
<dbReference type="Proteomes" id="UP000002673">
    <property type="component" value="Chromosome"/>
</dbReference>
<dbReference type="GO" id="GO:0005737">
    <property type="term" value="C:cytoplasm"/>
    <property type="evidence" value="ECO:0007669"/>
    <property type="project" value="UniProtKB-SubCell"/>
</dbReference>
<dbReference type="GO" id="GO:0043811">
    <property type="term" value="F:phosphate:acyl-[acyl carrier protein] acyltransferase activity"/>
    <property type="evidence" value="ECO:0007669"/>
    <property type="project" value="UniProtKB-UniRule"/>
</dbReference>
<dbReference type="GO" id="GO:0006633">
    <property type="term" value="P:fatty acid biosynthetic process"/>
    <property type="evidence" value="ECO:0007669"/>
    <property type="project" value="UniProtKB-UniRule"/>
</dbReference>
<dbReference type="GO" id="GO:0008654">
    <property type="term" value="P:phospholipid biosynthetic process"/>
    <property type="evidence" value="ECO:0007669"/>
    <property type="project" value="UniProtKB-KW"/>
</dbReference>
<dbReference type="FunFam" id="3.40.718.10:FF:000008">
    <property type="entry name" value="Phosphate acyltransferase"/>
    <property type="match status" value="1"/>
</dbReference>
<dbReference type="Gene3D" id="3.40.718.10">
    <property type="entry name" value="Isopropylmalate Dehydrogenase"/>
    <property type="match status" value="1"/>
</dbReference>
<dbReference type="HAMAP" id="MF_00019">
    <property type="entry name" value="PlsX"/>
    <property type="match status" value="1"/>
</dbReference>
<dbReference type="InterPro" id="IPR003664">
    <property type="entry name" value="FA_synthesis"/>
</dbReference>
<dbReference type="InterPro" id="IPR012281">
    <property type="entry name" value="Phospholipid_synth_PlsX-like"/>
</dbReference>
<dbReference type="NCBIfam" id="TIGR00182">
    <property type="entry name" value="plsX"/>
    <property type="match status" value="1"/>
</dbReference>
<dbReference type="PANTHER" id="PTHR30100">
    <property type="entry name" value="FATTY ACID/PHOSPHOLIPID SYNTHESIS PROTEIN PLSX"/>
    <property type="match status" value="1"/>
</dbReference>
<dbReference type="PANTHER" id="PTHR30100:SF1">
    <property type="entry name" value="PHOSPHATE ACYLTRANSFERASE"/>
    <property type="match status" value="1"/>
</dbReference>
<dbReference type="Pfam" id="PF02504">
    <property type="entry name" value="FA_synthesis"/>
    <property type="match status" value="1"/>
</dbReference>
<dbReference type="PIRSF" id="PIRSF002465">
    <property type="entry name" value="Phsphlp_syn_PlsX"/>
    <property type="match status" value="1"/>
</dbReference>
<dbReference type="SUPFAM" id="SSF53659">
    <property type="entry name" value="Isocitrate/Isopropylmalate dehydrogenase-like"/>
    <property type="match status" value="1"/>
</dbReference>
<name>PLSX_SHIFL</name>
<protein>
    <recommendedName>
        <fullName evidence="1">Phosphate acyltransferase</fullName>
        <ecNumber evidence="1">2.3.1.274</ecNumber>
    </recommendedName>
    <alternativeName>
        <fullName evidence="1">Acyl-ACP phosphotransacylase</fullName>
    </alternativeName>
    <alternativeName>
        <fullName evidence="1">Acyl-[acyl-carrier-protein]--phosphate acyltransferase</fullName>
    </alternativeName>
    <alternativeName>
        <fullName evidence="1">Phosphate-acyl-ACP acyltransferase</fullName>
    </alternativeName>
</protein>
<proteinExistence type="inferred from homology"/>
<keyword id="KW-0963">Cytoplasm</keyword>
<keyword id="KW-0444">Lipid biosynthesis</keyword>
<keyword id="KW-0443">Lipid metabolism</keyword>
<keyword id="KW-0594">Phospholipid biosynthesis</keyword>
<keyword id="KW-1208">Phospholipid metabolism</keyword>
<keyword id="KW-1185">Reference proteome</keyword>
<keyword id="KW-0808">Transferase</keyword>
<evidence type="ECO:0000255" key="1">
    <source>
        <dbReference type="HAMAP-Rule" id="MF_00019"/>
    </source>
</evidence>
<evidence type="ECO:0000305" key="2"/>